<comment type="function">
    <text evidence="3 4 5 6 7 10">Functions as a component of the DNA-binding general transcription factor complex TFIID. Binding of TFIID to a promoter (with or without TATA element) is the initial step in pre-initiation complex (PIC) formation. TFIID plays a key role in the regulation of gene expression by RNA polymerase II through different activities such as transcription activator interaction, core promoter recognition and selectivity, TFIIA and TFIIB interaction, chromatin modification (histone acetylation by TAF1), facilitation of DNA opening and initiation of transcription.</text>
</comment>
<comment type="subunit">
    <text evidence="3">TAF3 heterodimerizes with TAF10. The 1.2 MDa TFIID complex is composed of TATA binding protein (TBP) and the 14 TBP-associated factors. One copy of each TAF1, TAF2, TAF3, TAF7, TAF8, TAF11, TAF13, two copies of each TAF4, TAF5, TAF6, TAF9, TAF10, TAF12, and three copies of TAF14.</text>
</comment>
<comment type="subcellular location">
    <subcellularLocation>
        <location evidence="8">Nucleus</location>
    </subcellularLocation>
</comment>
<comment type="miscellaneous">
    <text evidence="9">Present with 3300 molecules/cell in log phase SD medium.</text>
</comment>
<comment type="similarity">
    <text evidence="11">Belongs to the TAF3 family.</text>
</comment>
<protein>
    <recommendedName>
        <fullName>Transcription initiation factor TFIID subunit 3</fullName>
    </recommendedName>
    <alternativeName>
        <fullName>TAFII-47</fullName>
        <shortName>TAFII47</shortName>
    </alternativeName>
    <alternativeName>
        <fullName>TBP-associated factor 3</fullName>
    </alternativeName>
    <alternativeName>
        <fullName>TBP-associated factor 47 kDa</fullName>
    </alternativeName>
</protein>
<name>TAF3_YEAST</name>
<dbReference type="EMBL" id="U33335">
    <property type="protein sequence ID" value="AAB68094.1"/>
    <property type="molecule type" value="Genomic_DNA"/>
</dbReference>
<dbReference type="EMBL" id="Z71255">
    <property type="protein sequence ID" value="CAA95030.1"/>
    <property type="molecule type" value="Genomic_DNA"/>
</dbReference>
<dbReference type="EMBL" id="Z48483">
    <property type="protein sequence ID" value="CAA88375.1"/>
    <property type="molecule type" value="Genomic_DNA"/>
</dbReference>
<dbReference type="EMBL" id="BK006949">
    <property type="protein sequence ID" value="DAA11417.1"/>
    <property type="molecule type" value="Genomic_DNA"/>
</dbReference>
<dbReference type="PIR" id="S52520">
    <property type="entry name" value="S52520"/>
</dbReference>
<dbReference type="RefSeq" id="NP_015314.1">
    <property type="nucleotide sequence ID" value="NM_001183825.1"/>
</dbReference>
<dbReference type="SMR" id="Q12297"/>
<dbReference type="BioGRID" id="36166">
    <property type="interactions" value="270"/>
</dbReference>
<dbReference type="ComplexPortal" id="CPX-1642">
    <property type="entry name" value="General transcription factor complex TFIID"/>
</dbReference>
<dbReference type="DIP" id="DIP-5328N"/>
<dbReference type="FunCoup" id="Q12297">
    <property type="interactions" value="339"/>
</dbReference>
<dbReference type="IntAct" id="Q12297">
    <property type="interactions" value="21"/>
</dbReference>
<dbReference type="MINT" id="Q12297"/>
<dbReference type="STRING" id="4932.YPL011C"/>
<dbReference type="iPTMnet" id="Q12297"/>
<dbReference type="PaxDb" id="4932-YPL011C"/>
<dbReference type="PeptideAtlas" id="Q12297"/>
<dbReference type="EnsemblFungi" id="YPL011C_mRNA">
    <property type="protein sequence ID" value="YPL011C"/>
    <property type="gene ID" value="YPL011C"/>
</dbReference>
<dbReference type="GeneID" id="856096"/>
<dbReference type="KEGG" id="sce:YPL011C"/>
<dbReference type="AGR" id="SGD:S000005932"/>
<dbReference type="SGD" id="S000005932">
    <property type="gene designation" value="TAF3"/>
</dbReference>
<dbReference type="VEuPathDB" id="FungiDB:YPL011C"/>
<dbReference type="eggNOG" id="ENOG502S96D">
    <property type="taxonomic scope" value="Eukaryota"/>
</dbReference>
<dbReference type="HOGENOM" id="CLU_704112_0_0_1"/>
<dbReference type="InParanoid" id="Q12297"/>
<dbReference type="OMA" id="MDNTFQR"/>
<dbReference type="OrthoDB" id="5402929at2759"/>
<dbReference type="BioCyc" id="YEAST:G3O-33930-MONOMER"/>
<dbReference type="BioGRID-ORCS" id="856096">
    <property type="hits" value="1 hit in 10 CRISPR screens"/>
</dbReference>
<dbReference type="PRO" id="PR:Q12297"/>
<dbReference type="Proteomes" id="UP000002311">
    <property type="component" value="Chromosome XVI"/>
</dbReference>
<dbReference type="RNAct" id="Q12297">
    <property type="molecule type" value="protein"/>
</dbReference>
<dbReference type="GO" id="GO:0005634">
    <property type="term" value="C:nucleus"/>
    <property type="evidence" value="ECO:0000303"/>
    <property type="project" value="ComplexPortal"/>
</dbReference>
<dbReference type="GO" id="GO:0005669">
    <property type="term" value="C:transcription factor TFIID complex"/>
    <property type="evidence" value="ECO:0000314"/>
    <property type="project" value="SGD"/>
</dbReference>
<dbReference type="GO" id="GO:0003682">
    <property type="term" value="F:chromatin binding"/>
    <property type="evidence" value="ECO:0000314"/>
    <property type="project" value="SGD"/>
</dbReference>
<dbReference type="GO" id="GO:0046982">
    <property type="term" value="F:protein heterodimerization activity"/>
    <property type="evidence" value="ECO:0007669"/>
    <property type="project" value="InterPro"/>
</dbReference>
<dbReference type="GO" id="GO:0045944">
    <property type="term" value="P:positive regulation of transcription by RNA polymerase II"/>
    <property type="evidence" value="ECO:0000314"/>
    <property type="project" value="ComplexPortal"/>
</dbReference>
<dbReference type="GO" id="GO:0006366">
    <property type="term" value="P:transcription by RNA polymerase II"/>
    <property type="evidence" value="ECO:0000314"/>
    <property type="project" value="SGD"/>
</dbReference>
<dbReference type="CDD" id="cd00076">
    <property type="entry name" value="HFD_SF"/>
    <property type="match status" value="1"/>
</dbReference>
<dbReference type="FunFam" id="1.10.20.10:FF:000114">
    <property type="entry name" value="Taf3p"/>
    <property type="match status" value="1"/>
</dbReference>
<dbReference type="Gene3D" id="1.10.20.10">
    <property type="entry name" value="Histone, subunit A"/>
    <property type="match status" value="1"/>
</dbReference>
<dbReference type="InterPro" id="IPR006565">
    <property type="entry name" value="BTP"/>
</dbReference>
<dbReference type="InterPro" id="IPR009072">
    <property type="entry name" value="Histone-fold"/>
</dbReference>
<dbReference type="Pfam" id="PF07524">
    <property type="entry name" value="Bromo_TP"/>
    <property type="match status" value="1"/>
</dbReference>
<dbReference type="SMART" id="SM00576">
    <property type="entry name" value="BTP"/>
    <property type="match status" value="1"/>
</dbReference>
<sequence length="353" mass="40296">MTTNNDFYFALLRISILQLLKAQGFDRARPSLVDVMTDLYAKFLSLLASEVSSIAQARCDQDDTIALQDITLALENLGIVKPTNVLDVYDENSELSSSRGMEKFKDWCIYSTQLTDARITALPTVELLQSEEKESDPLSAIPDYLNQLLQNKGAKQKLETKNRKTELIEDLINNNGLDDWIKLVIARQRINMIERASKKESQNVPALPHIAGYKSSILSRHHHTTITNEDRMPSAMTPRDEDALTEIQENPFVTSKLPIMRKENRLENITLSFEDEELESLGEVEGPNQKSQENNNEESFKENNKSLTESPHGDDRDISMFQFDSNVDTKWAEQEDMDSTFQRRTSLDYGGYF</sequence>
<accession>Q12297</accession>
<accession>D6W401</accession>
<proteinExistence type="evidence at protein level"/>
<evidence type="ECO:0000255" key="1"/>
<evidence type="ECO:0000256" key="2">
    <source>
        <dbReference type="SAM" id="MobiDB-lite"/>
    </source>
</evidence>
<evidence type="ECO:0000269" key="3">
    <source>
    </source>
</evidence>
<evidence type="ECO:0000269" key="4">
    <source>
    </source>
</evidence>
<evidence type="ECO:0000269" key="5">
    <source>
    </source>
</evidence>
<evidence type="ECO:0000269" key="6">
    <source>
    </source>
</evidence>
<evidence type="ECO:0000269" key="7">
    <source>
    </source>
</evidence>
<evidence type="ECO:0000269" key="8">
    <source>
    </source>
</evidence>
<evidence type="ECO:0000269" key="9">
    <source>
    </source>
</evidence>
<evidence type="ECO:0000269" key="10">
    <source>
    </source>
</evidence>
<evidence type="ECO:0000305" key="11"/>
<evidence type="ECO:0007744" key="12">
    <source>
    </source>
</evidence>
<evidence type="ECO:0007744" key="13">
    <source>
    </source>
</evidence>
<gene>
    <name type="primary">TAF3</name>
    <name type="synonym">TAF47</name>
    <name type="ordered locus">YPL011C</name>
    <name type="ORF">LPA6C</name>
</gene>
<organism>
    <name type="scientific">Saccharomyces cerevisiae (strain ATCC 204508 / S288c)</name>
    <name type="common">Baker's yeast</name>
    <dbReference type="NCBI Taxonomy" id="559292"/>
    <lineage>
        <taxon>Eukaryota</taxon>
        <taxon>Fungi</taxon>
        <taxon>Dikarya</taxon>
        <taxon>Ascomycota</taxon>
        <taxon>Saccharomycotina</taxon>
        <taxon>Saccharomycetes</taxon>
        <taxon>Saccharomycetales</taxon>
        <taxon>Saccharomycetaceae</taxon>
        <taxon>Saccharomyces</taxon>
    </lineage>
</organism>
<feature type="chain" id="PRO_0000118868" description="Transcription initiation factor TFIID subunit 3">
    <location>
        <begin position="1"/>
        <end position="353"/>
    </location>
</feature>
<feature type="domain" description="Histone-fold">
    <location>
        <begin position="11"/>
        <end position="78"/>
    </location>
</feature>
<feature type="region of interest" description="Disordered" evidence="2">
    <location>
        <begin position="279"/>
        <end position="353"/>
    </location>
</feature>
<feature type="coiled-coil region" evidence="1">
    <location>
        <begin position="289"/>
        <end position="309"/>
    </location>
</feature>
<feature type="compositionally biased region" description="Low complexity" evidence="2">
    <location>
        <begin position="283"/>
        <end position="294"/>
    </location>
</feature>
<feature type="modified residue" description="Phosphothreonine" evidence="12">
    <location>
        <position position="237"/>
    </location>
</feature>
<feature type="modified residue" description="Phosphoserine" evidence="12 13">
    <location>
        <position position="310"/>
    </location>
</feature>
<feature type="modified residue" description="Phosphoserine" evidence="13">
    <location>
        <position position="346"/>
    </location>
</feature>
<reference key="1">
    <citation type="journal article" date="1990" name="EMBO J.">
        <title>The CHL 1 (CTF 1) gene product of Saccharomyces cerevisiae is important for chromosome transmission and normal cell cycle progression in G2/M.</title>
        <authorList>
            <person name="Gerring S.L."/>
            <person name="Spencer F."/>
            <person name="Hieter P."/>
        </authorList>
    </citation>
    <scope>NUCLEOTIDE SEQUENCE [GENOMIC DNA]</scope>
</reference>
<reference key="2">
    <citation type="journal article" date="1988" name="Nucleic Acids Res.">
        <title>The yeast ADR6 gene encodes homopolymeric amino acid sequences and a potential metal-binding domain.</title>
        <authorList>
            <person name="O'Hara P.J."/>
            <person name="Horowitz H."/>
            <person name="Eichinger G."/>
            <person name="Young E.T."/>
        </authorList>
    </citation>
    <scope>NUCLEOTIDE SEQUENCE [GENOMIC DNA]</scope>
</reference>
<reference key="3">
    <citation type="journal article" date="1997" name="Nature">
        <title>The nucleotide sequence of Saccharomyces cerevisiae chromosome XVI.</title>
        <authorList>
            <person name="Bussey H."/>
            <person name="Storms R.K."/>
            <person name="Ahmed A."/>
            <person name="Albermann K."/>
            <person name="Allen E."/>
            <person name="Ansorge W."/>
            <person name="Araujo R."/>
            <person name="Aparicio A."/>
            <person name="Barrell B.G."/>
            <person name="Badcock K."/>
            <person name="Benes V."/>
            <person name="Botstein D."/>
            <person name="Bowman S."/>
            <person name="Brueckner M."/>
            <person name="Carpenter J."/>
            <person name="Cherry J.M."/>
            <person name="Chung E."/>
            <person name="Churcher C.M."/>
            <person name="Coster F."/>
            <person name="Davis K."/>
            <person name="Davis R.W."/>
            <person name="Dietrich F.S."/>
            <person name="Delius H."/>
            <person name="DiPaolo T."/>
            <person name="Dubois E."/>
            <person name="Duesterhoeft A."/>
            <person name="Duncan M."/>
            <person name="Floeth M."/>
            <person name="Fortin N."/>
            <person name="Friesen J.D."/>
            <person name="Fritz C."/>
            <person name="Goffeau A."/>
            <person name="Hall J."/>
            <person name="Hebling U."/>
            <person name="Heumann K."/>
            <person name="Hilbert H."/>
            <person name="Hillier L.W."/>
            <person name="Hunicke-Smith S."/>
            <person name="Hyman R.W."/>
            <person name="Johnston M."/>
            <person name="Kalman S."/>
            <person name="Kleine K."/>
            <person name="Komp C."/>
            <person name="Kurdi O."/>
            <person name="Lashkari D."/>
            <person name="Lew H."/>
            <person name="Lin A."/>
            <person name="Lin D."/>
            <person name="Louis E.J."/>
            <person name="Marathe R."/>
            <person name="Messenguy F."/>
            <person name="Mewes H.-W."/>
            <person name="Mirtipati S."/>
            <person name="Moestl D."/>
            <person name="Mueller-Auer S."/>
            <person name="Namath A."/>
            <person name="Nentwich U."/>
            <person name="Oefner P."/>
            <person name="Pearson D."/>
            <person name="Petel F.X."/>
            <person name="Pohl T.M."/>
            <person name="Purnelle B."/>
            <person name="Rajandream M.A."/>
            <person name="Rechmann S."/>
            <person name="Rieger M."/>
            <person name="Riles L."/>
            <person name="Roberts D."/>
            <person name="Schaefer M."/>
            <person name="Scharfe M."/>
            <person name="Scherens B."/>
            <person name="Schramm S."/>
            <person name="Schroeder M."/>
            <person name="Sdicu A.-M."/>
            <person name="Tettelin H."/>
            <person name="Urrestarazu L.A."/>
            <person name="Ushinsky S."/>
            <person name="Vierendeels F."/>
            <person name="Vissers S."/>
            <person name="Voss H."/>
            <person name="Walsh S.V."/>
            <person name="Wambutt R."/>
            <person name="Wang Y."/>
            <person name="Wedler E."/>
            <person name="Wedler H."/>
            <person name="Winnett E."/>
            <person name="Zhong W.-W."/>
            <person name="Zollner A."/>
            <person name="Vo D.H."/>
            <person name="Hani J."/>
        </authorList>
    </citation>
    <scope>NUCLEOTIDE SEQUENCE [LARGE SCALE GENOMIC DNA]</scope>
    <source>
        <strain>ATCC 204508 / S288c</strain>
    </source>
</reference>
<reference key="4">
    <citation type="journal article" date="2014" name="G3 (Bethesda)">
        <title>The reference genome sequence of Saccharomyces cerevisiae: Then and now.</title>
        <authorList>
            <person name="Engel S.R."/>
            <person name="Dietrich F.S."/>
            <person name="Fisk D.G."/>
            <person name="Binkley G."/>
            <person name="Balakrishnan R."/>
            <person name="Costanzo M.C."/>
            <person name="Dwight S.S."/>
            <person name="Hitz B.C."/>
            <person name="Karra K."/>
            <person name="Nash R.S."/>
            <person name="Weng S."/>
            <person name="Wong E.D."/>
            <person name="Lloyd P."/>
            <person name="Skrzypek M.S."/>
            <person name="Miyasato S.R."/>
            <person name="Simison M."/>
            <person name="Cherry J.M."/>
        </authorList>
    </citation>
    <scope>GENOME REANNOTATION</scope>
    <source>
        <strain>ATCC 204508 / S288c</strain>
    </source>
</reference>
<reference key="5">
    <citation type="journal article" date="1998" name="Cell">
        <title>Human TAF(II)28 and TAF(II)18 interact through a histone fold encoded by atypical evolutionary conserved motifs also found in the SPT3 family.</title>
        <authorList>
            <person name="Birck C."/>
            <person name="Poch O."/>
            <person name="Romier C."/>
            <person name="Ruff M."/>
            <person name="Mengus G."/>
            <person name="Lavigne A.C."/>
            <person name="Davidson I."/>
            <person name="Moras D."/>
        </authorList>
    </citation>
    <scope>FUNCTION</scope>
    <scope>TAF-TAF INTERACTION THROUGH HISTONE-FOLD DOMAIN</scope>
</reference>
<reference key="6">
    <citation type="journal article" date="2000" name="J. Biol. Chem.">
        <title>Identification of two novel TAF subunits of the yeast Saccharomyces cerevisiae TFIID complex.</title>
        <authorList>
            <person name="Sanders S.L."/>
            <person name="Weil P.A."/>
        </authorList>
    </citation>
    <scope>FUNCTION</scope>
    <scope>SUBUNIT</scope>
</reference>
<reference key="7">
    <citation type="journal article" date="2001" name="Mol. Cell. Biol.">
        <title>Histone folds mediate selective heterodimerization of yeast TAF(II)25 with TFIID components yTAF(II)47 and yTAF(II)65 and with SAGA component ySPT7.</title>
        <authorList>
            <person name="Gangloff Y.G."/>
            <person name="Sanders S.L."/>
            <person name="Romier C."/>
            <person name="Kirschner D.B."/>
            <person name="Weil P.A."/>
            <person name="Tora L."/>
            <person name="Davidson I."/>
        </authorList>
    </citation>
    <scope>FUNCTION</scope>
    <scope>INTERACTION IN TFIID AND SAGA</scope>
</reference>
<reference key="8">
    <citation type="journal article" date="2001" name="Trends Biochem. Sci.">
        <title>The histone fold is a key structural motif of transcription factor TFIID.</title>
        <authorList>
            <person name="Gangloff Y.G."/>
            <person name="Romier C."/>
            <person name="Thuault S."/>
            <person name="Werten S."/>
            <person name="Davidson I."/>
        </authorList>
    </citation>
    <scope>FUNCTION</scope>
    <scope>HISTONE-FOLD DOMAIN CHARACTERIZATION</scope>
</reference>
<reference key="9">
    <citation type="journal article" date="2002" name="Mol. Cell. Biol.">
        <title>Molecular characterization of Saccharomyces cerevisiae TFIID.</title>
        <authorList>
            <person name="Sanders S.L."/>
            <person name="Garbett K.A."/>
            <person name="Weil P.A."/>
        </authorList>
    </citation>
    <scope>FUNCTION</scope>
    <scope>TFIID STOICHIOMETRY</scope>
</reference>
<reference key="10">
    <citation type="journal article" date="2002" name="Plant Mol. Biol.">
        <title>Multi-protein complexes in eukaryotic gene transcription.</title>
        <authorList>
            <person name="Martinez E."/>
        </authorList>
    </citation>
    <scope>FUNCTION</scope>
</reference>
<reference key="11">
    <citation type="journal article" date="2003" name="Nature">
        <title>Global analysis of protein localization in budding yeast.</title>
        <authorList>
            <person name="Huh W.-K."/>
            <person name="Falvo J.V."/>
            <person name="Gerke L.C."/>
            <person name="Carroll A.S."/>
            <person name="Howson R.W."/>
            <person name="Weissman J.S."/>
            <person name="O'Shea E.K."/>
        </authorList>
    </citation>
    <scope>SUBCELLULAR LOCATION [LARGE SCALE ANALYSIS]</scope>
</reference>
<reference key="12">
    <citation type="journal article" date="2003" name="Nature">
        <title>Global analysis of protein expression in yeast.</title>
        <authorList>
            <person name="Ghaemmaghami S."/>
            <person name="Huh W.-K."/>
            <person name="Bower K."/>
            <person name="Howson R.W."/>
            <person name="Belle A."/>
            <person name="Dephoure N."/>
            <person name="O'Shea E.K."/>
            <person name="Weissman J.S."/>
        </authorList>
    </citation>
    <scope>LEVEL OF PROTEIN EXPRESSION [LARGE SCALE ANALYSIS]</scope>
</reference>
<reference key="13">
    <citation type="journal article" date="2002" name="EMBO J.">
        <title>Mapping histone fold TAFs within yeast TFIID.</title>
        <authorList>
            <person name="Leurent C."/>
            <person name="Sanders S.L."/>
            <person name="Ruhlmann C."/>
            <person name="Mallouh V."/>
            <person name="Weil P.A."/>
            <person name="Kirschner D.B."/>
            <person name="Tora L."/>
            <person name="Schultz P."/>
        </authorList>
    </citation>
    <scope>3D-STRUCTURE</scope>
    <scope>ELECTRON MICROSCOPY OF TFIID</scope>
</reference>
<reference key="14">
    <citation type="journal article" date="2007" name="J. Proteome Res.">
        <title>Large-scale phosphorylation analysis of alpha-factor-arrested Saccharomyces cerevisiae.</title>
        <authorList>
            <person name="Li X."/>
            <person name="Gerber S.A."/>
            <person name="Rudner A.D."/>
            <person name="Beausoleil S.A."/>
            <person name="Haas W."/>
            <person name="Villen J."/>
            <person name="Elias J.E."/>
            <person name="Gygi S.P."/>
        </authorList>
    </citation>
    <scope>IDENTIFICATION BY MASS SPECTROMETRY [LARGE SCALE ANALYSIS]</scope>
    <source>
        <strain>ADR376</strain>
    </source>
</reference>
<reference key="15">
    <citation type="journal article" date="2008" name="Mol. Cell. Proteomics">
        <title>A multidimensional chromatography technology for in-depth phosphoproteome analysis.</title>
        <authorList>
            <person name="Albuquerque C.P."/>
            <person name="Smolka M.B."/>
            <person name="Payne S.H."/>
            <person name="Bafna V."/>
            <person name="Eng J."/>
            <person name="Zhou H."/>
        </authorList>
    </citation>
    <scope>PHOSPHORYLATION [LARGE SCALE ANALYSIS] AT THR-237 AND SER-310</scope>
    <scope>IDENTIFICATION BY MASS SPECTROMETRY [LARGE SCALE ANALYSIS]</scope>
</reference>
<reference key="16">
    <citation type="journal article" date="2009" name="Science">
        <title>Global analysis of Cdk1 substrate phosphorylation sites provides insights into evolution.</title>
        <authorList>
            <person name="Holt L.J."/>
            <person name="Tuch B.B."/>
            <person name="Villen J."/>
            <person name="Johnson A.D."/>
            <person name="Gygi S.P."/>
            <person name="Morgan D.O."/>
        </authorList>
    </citation>
    <scope>PHOSPHORYLATION [LARGE SCALE ANALYSIS] AT SER-310 AND SER-346</scope>
    <scope>IDENTIFICATION BY MASS SPECTROMETRY [LARGE SCALE ANALYSIS]</scope>
</reference>
<keyword id="KW-0175">Coiled coil</keyword>
<keyword id="KW-0539">Nucleus</keyword>
<keyword id="KW-0597">Phosphoprotein</keyword>
<keyword id="KW-1185">Reference proteome</keyword>
<keyword id="KW-0804">Transcription</keyword>
<keyword id="KW-0805">Transcription regulation</keyword>